<name>SYI_FRAT1</name>
<sequence length="935" mass="106967">MSDYKDTLNLPKTSFSMKGNLANKEPMILNKWEKQGIYKKIREHFAGREKFVLHDGPPYANGSIHVGHAVNKILKDIIIKSKTLSGYDAPFTPTWDCHGLPIELQVEKKHGKAGQSISEDDFRKECRKYAKKQVEIQKKDFKRLGVLGDWEQPYLTINFDYEANMIRTLAKIIENGHLSKGFKPVHWCTDCGSALAEAEVEYADKVSPAIDVKFKIKDKDKLAQAFGLDSLNHDAFAIIWTTTPWTLPANQAIAVNNQLNYSLIKIEDFYIILAENLVEQTLKRYAIENAQIIATTTGNKLTGIMAEHPFYSRHVPILHGDHVTDDSGTGLVHTAPTHGVDDFTLGKEHNLSMEIFVKGNGCYSENTKLFAGEFIFKANDRIIELLGEKKRLMNSDKIKHSYPHCWRHKTPLMFRATPQWFISMEKQGLRDKALQAIKETSWAPSWGQARIEGMVKDRPDWCISRQRTWGVPLPLFIHKETEELHPNTIEILHKVAEKIEKDGIEAWFNADDCEFITETAQYKSVKDTLDVWFDSGSSSMCILDLDKRLSYPADLYLEGSDQHRGWFQTSLLVAMSAKGSQPYKEVFTHGFVVDEHGRKMSKSLGNVTSPQDIYNTLGADILRLWTASTDYKSEMAVSDQILKRTADTYRRLRNTARFLLSNLDGFNPVTDIIEFDKLVKLDQWAIAKTKEFQDKIIEVYDKYQTHTVAQLIHHFCSIEMGSFYLDIIKDRQYTAKTDGHPRKSAQTAIYHIVHALVRWMAPILSFTADEIWDATPKTTDLPIQLCEWYTGLKSFDQDAELDLEYWAKIQEIRSEVNRVLEIKRNEDVIKASLEAEITIYADKYNYNLLEKLGNELRFLLISSKADLKVIEESTSSSIAANIPGLLIEITKIEEPKCERCWHRSSTVGDNPQYKDICSRCVENITTEAGESREFA</sequence>
<reference key="1">
    <citation type="journal article" date="2007" name="PLoS ONE">
        <title>Genome sequencing shows that European isolates of Francisella tularensis subspecies tularensis are almost identical to US laboratory strain Schu S4.</title>
        <authorList>
            <person name="Chaudhuri R.R."/>
            <person name="Ren C.-P."/>
            <person name="Desmond L."/>
            <person name="Vincent G.A."/>
            <person name="Silman N.J."/>
            <person name="Brehm J.K."/>
            <person name="Elmore M.J."/>
            <person name="Hudson M.J."/>
            <person name="Forsman M."/>
            <person name="Isherwood K.E."/>
            <person name="Gurycova D."/>
            <person name="Minton N.P."/>
            <person name="Titball R.W."/>
            <person name="Pallen M.J."/>
            <person name="Vipond R."/>
        </authorList>
    </citation>
    <scope>NUCLEOTIDE SEQUENCE [LARGE SCALE GENOMIC DNA]</scope>
    <source>
        <strain>FSC 198</strain>
    </source>
</reference>
<proteinExistence type="inferred from homology"/>
<gene>
    <name evidence="1" type="primary">ileS</name>
    <name type="ordered locus">FTF0915c</name>
</gene>
<organism>
    <name type="scientific">Francisella tularensis subsp. tularensis (strain FSC 198)</name>
    <dbReference type="NCBI Taxonomy" id="393115"/>
    <lineage>
        <taxon>Bacteria</taxon>
        <taxon>Pseudomonadati</taxon>
        <taxon>Pseudomonadota</taxon>
        <taxon>Gammaproteobacteria</taxon>
        <taxon>Thiotrichales</taxon>
        <taxon>Francisellaceae</taxon>
        <taxon>Francisella</taxon>
    </lineage>
</organism>
<accession>Q14HT2</accession>
<feature type="chain" id="PRO_1000022065" description="Isoleucine--tRNA ligase">
    <location>
        <begin position="1"/>
        <end position="935"/>
    </location>
</feature>
<feature type="short sequence motif" description="'HIGH' region">
    <location>
        <begin position="58"/>
        <end position="68"/>
    </location>
</feature>
<feature type="short sequence motif" description="'KMSKS' region">
    <location>
        <begin position="599"/>
        <end position="603"/>
    </location>
</feature>
<feature type="binding site" evidence="1">
    <location>
        <position position="558"/>
    </location>
    <ligand>
        <name>L-isoleucyl-5'-AMP</name>
        <dbReference type="ChEBI" id="CHEBI:178002"/>
    </ligand>
</feature>
<feature type="binding site" evidence="1">
    <location>
        <position position="602"/>
    </location>
    <ligand>
        <name>ATP</name>
        <dbReference type="ChEBI" id="CHEBI:30616"/>
    </ligand>
</feature>
<feature type="binding site" evidence="1">
    <location>
        <position position="897"/>
    </location>
    <ligand>
        <name>Zn(2+)</name>
        <dbReference type="ChEBI" id="CHEBI:29105"/>
    </ligand>
</feature>
<feature type="binding site" evidence="1">
    <location>
        <position position="900"/>
    </location>
    <ligand>
        <name>Zn(2+)</name>
        <dbReference type="ChEBI" id="CHEBI:29105"/>
    </ligand>
</feature>
<feature type="binding site" evidence="1">
    <location>
        <position position="917"/>
    </location>
    <ligand>
        <name>Zn(2+)</name>
        <dbReference type="ChEBI" id="CHEBI:29105"/>
    </ligand>
</feature>
<feature type="binding site" evidence="1">
    <location>
        <position position="920"/>
    </location>
    <ligand>
        <name>Zn(2+)</name>
        <dbReference type="ChEBI" id="CHEBI:29105"/>
    </ligand>
</feature>
<protein>
    <recommendedName>
        <fullName evidence="1">Isoleucine--tRNA ligase</fullName>
        <ecNumber evidence="1">6.1.1.5</ecNumber>
    </recommendedName>
    <alternativeName>
        <fullName evidence="1">Isoleucyl-tRNA synthetase</fullName>
        <shortName evidence="1">IleRS</shortName>
    </alternativeName>
</protein>
<dbReference type="EC" id="6.1.1.5" evidence="1"/>
<dbReference type="EMBL" id="AM286280">
    <property type="protein sequence ID" value="CAL08931.1"/>
    <property type="molecule type" value="Genomic_DNA"/>
</dbReference>
<dbReference type="RefSeq" id="WP_003020930.1">
    <property type="nucleotide sequence ID" value="NC_008245.1"/>
</dbReference>
<dbReference type="SMR" id="Q14HT2"/>
<dbReference type="KEGG" id="ftf:FTF0915c"/>
<dbReference type="HOGENOM" id="CLU_001493_7_0_6"/>
<dbReference type="GO" id="GO:0005829">
    <property type="term" value="C:cytosol"/>
    <property type="evidence" value="ECO:0007669"/>
    <property type="project" value="TreeGrafter"/>
</dbReference>
<dbReference type="GO" id="GO:0002161">
    <property type="term" value="F:aminoacyl-tRNA deacylase activity"/>
    <property type="evidence" value="ECO:0007669"/>
    <property type="project" value="InterPro"/>
</dbReference>
<dbReference type="GO" id="GO:0005524">
    <property type="term" value="F:ATP binding"/>
    <property type="evidence" value="ECO:0007669"/>
    <property type="project" value="UniProtKB-UniRule"/>
</dbReference>
<dbReference type="GO" id="GO:0004822">
    <property type="term" value="F:isoleucine-tRNA ligase activity"/>
    <property type="evidence" value="ECO:0007669"/>
    <property type="project" value="UniProtKB-UniRule"/>
</dbReference>
<dbReference type="GO" id="GO:0000049">
    <property type="term" value="F:tRNA binding"/>
    <property type="evidence" value="ECO:0007669"/>
    <property type="project" value="InterPro"/>
</dbReference>
<dbReference type="GO" id="GO:0008270">
    <property type="term" value="F:zinc ion binding"/>
    <property type="evidence" value="ECO:0007669"/>
    <property type="project" value="UniProtKB-UniRule"/>
</dbReference>
<dbReference type="GO" id="GO:0006428">
    <property type="term" value="P:isoleucyl-tRNA aminoacylation"/>
    <property type="evidence" value="ECO:0007669"/>
    <property type="project" value="UniProtKB-UniRule"/>
</dbReference>
<dbReference type="CDD" id="cd07960">
    <property type="entry name" value="Anticodon_Ia_Ile_BEm"/>
    <property type="match status" value="1"/>
</dbReference>
<dbReference type="CDD" id="cd00818">
    <property type="entry name" value="IleRS_core"/>
    <property type="match status" value="1"/>
</dbReference>
<dbReference type="FunFam" id="1.10.730.20:FF:000001">
    <property type="entry name" value="Isoleucine--tRNA ligase"/>
    <property type="match status" value="1"/>
</dbReference>
<dbReference type="FunFam" id="3.40.50.620:FF:000042">
    <property type="entry name" value="Isoleucine--tRNA ligase"/>
    <property type="match status" value="1"/>
</dbReference>
<dbReference type="FunFam" id="3.40.50.620:FF:000048">
    <property type="entry name" value="Isoleucine--tRNA ligase"/>
    <property type="match status" value="1"/>
</dbReference>
<dbReference type="Gene3D" id="1.10.730.20">
    <property type="match status" value="1"/>
</dbReference>
<dbReference type="Gene3D" id="3.40.50.620">
    <property type="entry name" value="HUPs"/>
    <property type="match status" value="2"/>
</dbReference>
<dbReference type="Gene3D" id="3.90.740.10">
    <property type="entry name" value="Valyl/Leucyl/Isoleucyl-tRNA synthetase, editing domain"/>
    <property type="match status" value="1"/>
</dbReference>
<dbReference type="HAMAP" id="MF_02002">
    <property type="entry name" value="Ile_tRNA_synth_type1"/>
    <property type="match status" value="1"/>
</dbReference>
<dbReference type="InterPro" id="IPR001412">
    <property type="entry name" value="aa-tRNA-synth_I_CS"/>
</dbReference>
<dbReference type="InterPro" id="IPR002300">
    <property type="entry name" value="aa-tRNA-synth_Ia"/>
</dbReference>
<dbReference type="InterPro" id="IPR033708">
    <property type="entry name" value="Anticodon_Ile_BEm"/>
</dbReference>
<dbReference type="InterPro" id="IPR002301">
    <property type="entry name" value="Ile-tRNA-ligase"/>
</dbReference>
<dbReference type="InterPro" id="IPR023585">
    <property type="entry name" value="Ile-tRNA-ligase_type1"/>
</dbReference>
<dbReference type="InterPro" id="IPR050081">
    <property type="entry name" value="Ile-tRNA_ligase"/>
</dbReference>
<dbReference type="InterPro" id="IPR013155">
    <property type="entry name" value="M/V/L/I-tRNA-synth_anticd-bd"/>
</dbReference>
<dbReference type="InterPro" id="IPR014729">
    <property type="entry name" value="Rossmann-like_a/b/a_fold"/>
</dbReference>
<dbReference type="InterPro" id="IPR009080">
    <property type="entry name" value="tRNAsynth_Ia_anticodon-bd"/>
</dbReference>
<dbReference type="InterPro" id="IPR009008">
    <property type="entry name" value="Val/Leu/Ile-tRNA-synth_edit"/>
</dbReference>
<dbReference type="InterPro" id="IPR010663">
    <property type="entry name" value="Znf_FPG/IleRS"/>
</dbReference>
<dbReference type="NCBIfam" id="TIGR00392">
    <property type="entry name" value="ileS"/>
    <property type="match status" value="1"/>
</dbReference>
<dbReference type="PANTHER" id="PTHR42765:SF1">
    <property type="entry name" value="ISOLEUCINE--TRNA LIGASE, MITOCHONDRIAL"/>
    <property type="match status" value="1"/>
</dbReference>
<dbReference type="PANTHER" id="PTHR42765">
    <property type="entry name" value="SOLEUCYL-TRNA SYNTHETASE"/>
    <property type="match status" value="1"/>
</dbReference>
<dbReference type="Pfam" id="PF08264">
    <property type="entry name" value="Anticodon_1"/>
    <property type="match status" value="1"/>
</dbReference>
<dbReference type="Pfam" id="PF00133">
    <property type="entry name" value="tRNA-synt_1"/>
    <property type="match status" value="1"/>
</dbReference>
<dbReference type="Pfam" id="PF06827">
    <property type="entry name" value="zf-FPG_IleRS"/>
    <property type="match status" value="1"/>
</dbReference>
<dbReference type="PRINTS" id="PR00984">
    <property type="entry name" value="TRNASYNTHILE"/>
</dbReference>
<dbReference type="SUPFAM" id="SSF47323">
    <property type="entry name" value="Anticodon-binding domain of a subclass of class I aminoacyl-tRNA synthetases"/>
    <property type="match status" value="1"/>
</dbReference>
<dbReference type="SUPFAM" id="SSF52374">
    <property type="entry name" value="Nucleotidylyl transferase"/>
    <property type="match status" value="1"/>
</dbReference>
<dbReference type="SUPFAM" id="SSF50677">
    <property type="entry name" value="ValRS/IleRS/LeuRS editing domain"/>
    <property type="match status" value="1"/>
</dbReference>
<dbReference type="PROSITE" id="PS00178">
    <property type="entry name" value="AA_TRNA_LIGASE_I"/>
    <property type="match status" value="1"/>
</dbReference>
<comment type="function">
    <text evidence="1">Catalyzes the attachment of isoleucine to tRNA(Ile). As IleRS can inadvertently accommodate and process structurally similar amino acids such as valine, to avoid such errors it has two additional distinct tRNA(Ile)-dependent editing activities. One activity is designated as 'pretransfer' editing and involves the hydrolysis of activated Val-AMP. The other activity is designated 'posttransfer' editing and involves deacylation of mischarged Val-tRNA(Ile).</text>
</comment>
<comment type="catalytic activity">
    <reaction evidence="1">
        <text>tRNA(Ile) + L-isoleucine + ATP = L-isoleucyl-tRNA(Ile) + AMP + diphosphate</text>
        <dbReference type="Rhea" id="RHEA:11060"/>
        <dbReference type="Rhea" id="RHEA-COMP:9666"/>
        <dbReference type="Rhea" id="RHEA-COMP:9695"/>
        <dbReference type="ChEBI" id="CHEBI:30616"/>
        <dbReference type="ChEBI" id="CHEBI:33019"/>
        <dbReference type="ChEBI" id="CHEBI:58045"/>
        <dbReference type="ChEBI" id="CHEBI:78442"/>
        <dbReference type="ChEBI" id="CHEBI:78528"/>
        <dbReference type="ChEBI" id="CHEBI:456215"/>
        <dbReference type="EC" id="6.1.1.5"/>
    </reaction>
</comment>
<comment type="cofactor">
    <cofactor evidence="1">
        <name>Zn(2+)</name>
        <dbReference type="ChEBI" id="CHEBI:29105"/>
    </cofactor>
    <text evidence="1">Binds 1 zinc ion per subunit.</text>
</comment>
<comment type="subunit">
    <text evidence="1">Monomer.</text>
</comment>
<comment type="subcellular location">
    <subcellularLocation>
        <location evidence="1">Cytoplasm</location>
    </subcellularLocation>
</comment>
<comment type="domain">
    <text evidence="1">IleRS has two distinct active sites: one for aminoacylation and one for editing. The misactivated valine is translocated from the active site to the editing site, which sterically excludes the correctly activated isoleucine. The single editing site contains two valyl binding pockets, one specific for each substrate (Val-AMP or Val-tRNA(Ile)).</text>
</comment>
<comment type="similarity">
    <text evidence="1">Belongs to the class-I aminoacyl-tRNA synthetase family. IleS type 1 subfamily.</text>
</comment>
<evidence type="ECO:0000255" key="1">
    <source>
        <dbReference type="HAMAP-Rule" id="MF_02002"/>
    </source>
</evidence>
<keyword id="KW-0030">Aminoacyl-tRNA synthetase</keyword>
<keyword id="KW-0067">ATP-binding</keyword>
<keyword id="KW-0963">Cytoplasm</keyword>
<keyword id="KW-0436">Ligase</keyword>
<keyword id="KW-0479">Metal-binding</keyword>
<keyword id="KW-0547">Nucleotide-binding</keyword>
<keyword id="KW-0648">Protein biosynthesis</keyword>
<keyword id="KW-0862">Zinc</keyword>